<sequence length="323" mass="35016">MAGTPDASMEEILWRSPPHVQMMGGYLHSNNILFYFAESPFFDPTSNNASLAIQANYNEAFRHFVETREAFEGRLKTMQGLEFVVSYDPIQAAAQPDGRFAHEPSNIWVIRKQNRRKRTGLDDEVAVLSTYFIVGDCIYMAPSVASVVGNRILSAVTSLTSLLKTASTLPTFTPSHGHTYMPPALKQADASQPGTQSQQSKENTPLPDADAAGKASLVGSSQMVGAGSSLQDTRTLAESFNLLRRYGDEFMDEHPLVGEPGSFILSRVNDTDRTSAAKPPATAAKVGTPQVRVDTPGKVSEKGATPSGSEENKMRKKKTKVGS</sequence>
<protein>
    <recommendedName>
        <fullName>Mediator of RNA polymerase II transcription subunit 6</fullName>
    </recommendedName>
    <alternativeName>
        <fullName>Mediator complex subunit 6</fullName>
    </alternativeName>
</protein>
<comment type="function">
    <text evidence="1">Component of the Mediator complex, a coactivator involved in the regulated transcription of nearly all RNA polymerase II-dependent genes. Mediator functions as a bridge to convey information from gene-specific regulatory proteins to the basal RNA polymerase II transcription machinery. Mediator is recruited to promoters by direct interactions with regulatory proteins and serves as a scaffold for the assembly of a functional preinitiation complex with RNA polymerase II and the general transcription factors (By similarity).</text>
</comment>
<comment type="subunit">
    <text evidence="1">Component of the Mediator complex.</text>
</comment>
<comment type="subcellular location">
    <subcellularLocation>
        <location evidence="1">Nucleus</location>
    </subcellularLocation>
</comment>
<comment type="similarity">
    <text evidence="3">Belongs to the Mediator complex subunit 6 family.</text>
</comment>
<comment type="sequence caution" evidence="3">
    <conflict type="erroneous gene model prediction">
        <sequence resource="EMBL-CDS" id="CAK42218"/>
    </conflict>
</comment>
<feature type="chain" id="PRO_0000303050" description="Mediator of RNA polymerase II transcription subunit 6">
    <location>
        <begin position="1"/>
        <end position="323"/>
    </location>
</feature>
<feature type="region of interest" description="Disordered" evidence="2">
    <location>
        <begin position="172"/>
        <end position="213"/>
    </location>
</feature>
<feature type="region of interest" description="Disordered" evidence="2">
    <location>
        <begin position="271"/>
        <end position="323"/>
    </location>
</feature>
<feature type="compositionally biased region" description="Polar residues" evidence="2">
    <location>
        <begin position="189"/>
        <end position="203"/>
    </location>
</feature>
<feature type="compositionally biased region" description="Low complexity" evidence="2">
    <location>
        <begin position="276"/>
        <end position="285"/>
    </location>
</feature>
<feature type="compositionally biased region" description="Basic residues" evidence="2">
    <location>
        <begin position="314"/>
        <end position="323"/>
    </location>
</feature>
<accession>A2R4I0</accession>
<evidence type="ECO:0000250" key="1"/>
<evidence type="ECO:0000256" key="2">
    <source>
        <dbReference type="SAM" id="MobiDB-lite"/>
    </source>
</evidence>
<evidence type="ECO:0000305" key="3"/>
<dbReference type="EMBL" id="AM270330">
    <property type="protein sequence ID" value="CAK42218.1"/>
    <property type="status" value="ALT_SEQ"/>
    <property type="molecule type" value="Genomic_DNA"/>
</dbReference>
<dbReference type="RefSeq" id="XP_001396588.2">
    <property type="nucleotide sequence ID" value="XM_001396551.2"/>
</dbReference>
<dbReference type="SMR" id="A2R4I0"/>
<dbReference type="EnsemblFungi" id="CAK42218">
    <property type="protein sequence ID" value="CAK42218"/>
    <property type="gene ID" value="An15g00490"/>
</dbReference>
<dbReference type="VEuPathDB" id="FungiDB:An15g00490"/>
<dbReference type="OrthoDB" id="115685at5052"/>
<dbReference type="Proteomes" id="UP000006706">
    <property type="component" value="Chromosome 3R"/>
</dbReference>
<dbReference type="GO" id="GO:0016592">
    <property type="term" value="C:mediator complex"/>
    <property type="evidence" value="ECO:0007669"/>
    <property type="project" value="InterPro"/>
</dbReference>
<dbReference type="GO" id="GO:0003712">
    <property type="term" value="F:transcription coregulator activity"/>
    <property type="evidence" value="ECO:0007669"/>
    <property type="project" value="InterPro"/>
</dbReference>
<dbReference type="GO" id="GO:0006357">
    <property type="term" value="P:regulation of transcription by RNA polymerase II"/>
    <property type="evidence" value="ECO:0007669"/>
    <property type="project" value="InterPro"/>
</dbReference>
<dbReference type="FunFam" id="3.10.450.580:FF:000003">
    <property type="entry name" value="Mediator of RNA polymerase II transcription subunit 6"/>
    <property type="match status" value="1"/>
</dbReference>
<dbReference type="Gene3D" id="3.10.450.580">
    <property type="entry name" value="Mediator complex, subunit Med6"/>
    <property type="match status" value="1"/>
</dbReference>
<dbReference type="InterPro" id="IPR007018">
    <property type="entry name" value="Mediator_Med6"/>
</dbReference>
<dbReference type="InterPro" id="IPR016612">
    <property type="entry name" value="Mediator_Med6_fun"/>
</dbReference>
<dbReference type="InterPro" id="IPR038566">
    <property type="entry name" value="Mediator_Med6_sf"/>
</dbReference>
<dbReference type="PANTHER" id="PTHR13104">
    <property type="entry name" value="MED-6-RELATED"/>
    <property type="match status" value="1"/>
</dbReference>
<dbReference type="Pfam" id="PF04934">
    <property type="entry name" value="Med6"/>
    <property type="match status" value="1"/>
</dbReference>
<dbReference type="PIRSF" id="PIRSF013286">
    <property type="entry name" value="MED6_fungi"/>
    <property type="match status" value="1"/>
</dbReference>
<proteinExistence type="inferred from homology"/>
<reference key="1">
    <citation type="journal article" date="2007" name="Nat. Biotechnol.">
        <title>Genome sequencing and analysis of the versatile cell factory Aspergillus niger CBS 513.88.</title>
        <authorList>
            <person name="Pel H.J."/>
            <person name="de Winde J.H."/>
            <person name="Archer D.B."/>
            <person name="Dyer P.S."/>
            <person name="Hofmann G."/>
            <person name="Schaap P.J."/>
            <person name="Turner G."/>
            <person name="de Vries R.P."/>
            <person name="Albang R."/>
            <person name="Albermann K."/>
            <person name="Andersen M.R."/>
            <person name="Bendtsen J.D."/>
            <person name="Benen J.A.E."/>
            <person name="van den Berg M."/>
            <person name="Breestraat S."/>
            <person name="Caddick M.X."/>
            <person name="Contreras R."/>
            <person name="Cornell M."/>
            <person name="Coutinho P.M."/>
            <person name="Danchin E.G.J."/>
            <person name="Debets A.J.M."/>
            <person name="Dekker P."/>
            <person name="van Dijck P.W.M."/>
            <person name="van Dijk A."/>
            <person name="Dijkhuizen L."/>
            <person name="Driessen A.J.M."/>
            <person name="d'Enfert C."/>
            <person name="Geysens S."/>
            <person name="Goosen C."/>
            <person name="Groot G.S.P."/>
            <person name="de Groot P.W.J."/>
            <person name="Guillemette T."/>
            <person name="Henrissat B."/>
            <person name="Herweijer M."/>
            <person name="van den Hombergh J.P.T.W."/>
            <person name="van den Hondel C.A.M.J.J."/>
            <person name="van der Heijden R.T.J.M."/>
            <person name="van der Kaaij R.M."/>
            <person name="Klis F.M."/>
            <person name="Kools H.J."/>
            <person name="Kubicek C.P."/>
            <person name="van Kuyk P.A."/>
            <person name="Lauber J."/>
            <person name="Lu X."/>
            <person name="van der Maarel M.J.E.C."/>
            <person name="Meulenberg R."/>
            <person name="Menke H."/>
            <person name="Mortimer M.A."/>
            <person name="Nielsen J."/>
            <person name="Oliver S.G."/>
            <person name="Olsthoorn M."/>
            <person name="Pal K."/>
            <person name="van Peij N.N.M.E."/>
            <person name="Ram A.F.J."/>
            <person name="Rinas U."/>
            <person name="Roubos J.A."/>
            <person name="Sagt C.M.J."/>
            <person name="Schmoll M."/>
            <person name="Sun J."/>
            <person name="Ussery D."/>
            <person name="Varga J."/>
            <person name="Vervecken W."/>
            <person name="van de Vondervoort P.J.J."/>
            <person name="Wedler H."/>
            <person name="Woesten H.A.B."/>
            <person name="Zeng A.-P."/>
            <person name="van Ooyen A.J.J."/>
            <person name="Visser J."/>
            <person name="Stam H."/>
        </authorList>
    </citation>
    <scope>NUCLEOTIDE SEQUENCE [LARGE SCALE GENOMIC DNA]</scope>
    <source>
        <strain>ATCC MYA-4892 / CBS 513.88 / FGSC A1513</strain>
    </source>
</reference>
<keyword id="KW-0010">Activator</keyword>
<keyword id="KW-0539">Nucleus</keyword>
<keyword id="KW-1185">Reference proteome</keyword>
<keyword id="KW-0804">Transcription</keyword>
<keyword id="KW-0805">Transcription regulation</keyword>
<gene>
    <name type="primary">med6</name>
    <name type="ORF">An15g00490</name>
</gene>
<organism>
    <name type="scientific">Aspergillus niger (strain ATCC MYA-4892 / CBS 513.88 / FGSC A1513)</name>
    <dbReference type="NCBI Taxonomy" id="425011"/>
    <lineage>
        <taxon>Eukaryota</taxon>
        <taxon>Fungi</taxon>
        <taxon>Dikarya</taxon>
        <taxon>Ascomycota</taxon>
        <taxon>Pezizomycotina</taxon>
        <taxon>Eurotiomycetes</taxon>
        <taxon>Eurotiomycetidae</taxon>
        <taxon>Eurotiales</taxon>
        <taxon>Aspergillaceae</taxon>
        <taxon>Aspergillus</taxon>
        <taxon>Aspergillus subgen. Circumdati</taxon>
    </lineage>
</organism>
<name>MED6_ASPNC</name>